<name>TARG1_HUMAN</name>
<accession>Q8IXB3</accession>
<accession>A6NMK4</accession>
<proteinExistence type="evidence at protein level"/>
<feature type="chain" id="PRO_0000263639" description="Trafficking regulator of GLUT4 1">
    <location>
        <begin position="1"/>
        <end position="177"/>
    </location>
</feature>
<feature type="topological domain" description="Cytoplasmic" evidence="2">
    <location>
        <begin position="1"/>
        <end position="105"/>
    </location>
</feature>
<feature type="intramembrane region" description="Helical" evidence="3">
    <location>
        <begin position="106"/>
        <end position="126"/>
    </location>
</feature>
<feature type="topological domain" description="Cytoplasmic" evidence="2">
    <location>
        <begin position="127"/>
        <end position="153"/>
    </location>
</feature>
<feature type="transmembrane region" description="Helical" evidence="3">
    <location>
        <begin position="154"/>
        <end position="174"/>
    </location>
</feature>
<feature type="topological domain" description="Extracellular" evidence="2">
    <location>
        <begin position="175"/>
        <end position="177"/>
    </location>
</feature>
<feature type="region of interest" description="Disordered" evidence="4">
    <location>
        <begin position="71"/>
        <end position="92"/>
    </location>
</feature>
<feature type="compositionally biased region" description="Low complexity" evidence="4">
    <location>
        <begin position="72"/>
        <end position="88"/>
    </location>
</feature>
<feature type="modified residue" description="Phosphoserine" evidence="1">
    <location>
        <position position="48"/>
    </location>
</feature>
<feature type="modified residue" description="Phosphoserine" evidence="1">
    <location>
        <position position="87"/>
    </location>
</feature>
<feature type="modified residue" description="Phosphoserine" evidence="1">
    <location>
        <position position="88"/>
    </location>
</feature>
<feature type="sequence variant" id="VAR_029589" description="In dbSNP:rs75616699." evidence="5">
    <original>H</original>
    <variation>Y</variation>
    <location>
        <position position="3"/>
    </location>
</feature>
<feature type="sequence variant" id="VAR_029590" description="In dbSNP:rs111587833." evidence="5">
    <original>P</original>
    <variation>S</variation>
    <location>
        <position position="15"/>
    </location>
</feature>
<feature type="sequence variant" id="VAR_029591" description="In dbSNP:rs111701043." evidence="5">
    <original>A</original>
    <variation>T</variation>
    <location>
        <position position="18"/>
    </location>
</feature>
<feature type="sequence variant" id="VAR_029592" description="In dbSNP:rs6502774." evidence="5">
    <original>F</original>
    <variation>S</variation>
    <location>
        <position position="20"/>
    </location>
</feature>
<feature type="sequence variant" id="VAR_029593" description="In dbSNP:rs75025906." evidence="5">
    <original>E</original>
    <variation>D</variation>
    <location>
        <position position="34"/>
    </location>
</feature>
<feature type="sequence variant" id="VAR_029594" description="In dbSNP:rs6502776." evidence="5">
    <original>S</original>
    <variation>G</variation>
    <location>
        <position position="57"/>
    </location>
</feature>
<dbReference type="EMBL" id="AB090231">
    <property type="protein sequence ID" value="BAC43751.1"/>
    <property type="molecule type" value="mRNA"/>
</dbReference>
<dbReference type="EMBL" id="AC032044">
    <property type="status" value="NOT_ANNOTATED_CDS"/>
    <property type="molecule type" value="Genomic_DNA"/>
</dbReference>
<dbReference type="EMBL" id="CH471108">
    <property type="protein sequence ID" value="EAW90630.1"/>
    <property type="molecule type" value="Genomic_DNA"/>
</dbReference>
<dbReference type="CCDS" id="CCDS42225.1"/>
<dbReference type="RefSeq" id="NP_758955.2">
    <property type="nucleotide sequence ID" value="NM_172367.3"/>
</dbReference>
<dbReference type="BioGRID" id="130417">
    <property type="interactions" value="123"/>
</dbReference>
<dbReference type="FunCoup" id="Q8IXB3">
    <property type="interactions" value="58"/>
</dbReference>
<dbReference type="IntAct" id="Q8IXB3">
    <property type="interactions" value="9"/>
</dbReference>
<dbReference type="STRING" id="9606.ENSP00000329548"/>
<dbReference type="iPTMnet" id="Q8IXB3"/>
<dbReference type="PhosphoSitePlus" id="Q8IXB3"/>
<dbReference type="BioMuta" id="TUSC5"/>
<dbReference type="DMDM" id="229462764"/>
<dbReference type="MassIVE" id="Q8IXB3"/>
<dbReference type="PaxDb" id="9606-ENSP00000329548"/>
<dbReference type="PeptideAtlas" id="Q8IXB3"/>
<dbReference type="ProteomicsDB" id="70982"/>
<dbReference type="Antibodypedia" id="58595">
    <property type="antibodies" value="147 antibodies from 27 providers"/>
</dbReference>
<dbReference type="DNASU" id="286753"/>
<dbReference type="Ensembl" id="ENST00000333813.4">
    <property type="protein sequence ID" value="ENSP00000329548.3"/>
    <property type="gene ID" value="ENSG00000184811.4"/>
</dbReference>
<dbReference type="GeneID" id="286753"/>
<dbReference type="KEGG" id="hsa:286753"/>
<dbReference type="MANE-Select" id="ENST00000333813.4">
    <property type="protein sequence ID" value="ENSP00000329548.3"/>
    <property type="RefSeq nucleotide sequence ID" value="NM_172367.3"/>
    <property type="RefSeq protein sequence ID" value="NP_758955.2"/>
</dbReference>
<dbReference type="UCSC" id="uc002fsi.1">
    <property type="organism name" value="human"/>
</dbReference>
<dbReference type="AGR" id="HGNC:29592"/>
<dbReference type="CTD" id="286753"/>
<dbReference type="DisGeNET" id="286753"/>
<dbReference type="GeneCards" id="TRARG1"/>
<dbReference type="HGNC" id="HGNC:29592">
    <property type="gene designation" value="TRARG1"/>
</dbReference>
<dbReference type="HPA" id="ENSG00000184811">
    <property type="expression patterns" value="Group enriched (adipose tissue, breast)"/>
</dbReference>
<dbReference type="MIM" id="612211">
    <property type="type" value="gene"/>
</dbReference>
<dbReference type="neXtProt" id="NX_Q8IXB3"/>
<dbReference type="OpenTargets" id="ENSG00000184811"/>
<dbReference type="PharmGKB" id="PA134868023"/>
<dbReference type="VEuPathDB" id="HostDB:ENSG00000184811"/>
<dbReference type="eggNOG" id="ENOG502RY44">
    <property type="taxonomic scope" value="Eukaryota"/>
</dbReference>
<dbReference type="GeneTree" id="ENSGT00940000160337"/>
<dbReference type="HOGENOM" id="CLU_103195_0_0_1"/>
<dbReference type="InParanoid" id="Q8IXB3"/>
<dbReference type="OMA" id="AITSCFC"/>
<dbReference type="OrthoDB" id="9049275at2759"/>
<dbReference type="PAN-GO" id="Q8IXB3">
    <property type="GO annotations" value="1 GO annotation based on evolutionary models"/>
</dbReference>
<dbReference type="PhylomeDB" id="Q8IXB3"/>
<dbReference type="TreeFam" id="TF333012"/>
<dbReference type="PathwayCommons" id="Q8IXB3"/>
<dbReference type="SignaLink" id="Q8IXB3"/>
<dbReference type="BioGRID-ORCS" id="286753">
    <property type="hits" value="14 hits in 1134 CRISPR screens"/>
</dbReference>
<dbReference type="ChiTaRS" id="TUSC5">
    <property type="organism name" value="human"/>
</dbReference>
<dbReference type="GenomeRNAi" id="286753"/>
<dbReference type="Pharos" id="Q8IXB3">
    <property type="development level" value="Tbio"/>
</dbReference>
<dbReference type="PRO" id="PR:Q8IXB3"/>
<dbReference type="Proteomes" id="UP000005640">
    <property type="component" value="Chromosome 17"/>
</dbReference>
<dbReference type="RNAct" id="Q8IXB3">
    <property type="molecule type" value="protein"/>
</dbReference>
<dbReference type="Bgee" id="ENSG00000184811">
    <property type="expression patterns" value="Expressed in subcutaneous adipose tissue and 75 other cell types or tissues"/>
</dbReference>
<dbReference type="GO" id="GO:0030659">
    <property type="term" value="C:cytoplasmic vesicle membrane"/>
    <property type="evidence" value="ECO:0000250"/>
    <property type="project" value="UniProtKB"/>
</dbReference>
<dbReference type="GO" id="GO:0012505">
    <property type="term" value="C:endomembrane system"/>
    <property type="evidence" value="ECO:0007669"/>
    <property type="project" value="UniProtKB-SubCell"/>
</dbReference>
<dbReference type="GO" id="GO:0016020">
    <property type="term" value="C:membrane"/>
    <property type="evidence" value="ECO:0000318"/>
    <property type="project" value="GO_Central"/>
</dbReference>
<dbReference type="GO" id="GO:0048471">
    <property type="term" value="C:perinuclear region of cytoplasm"/>
    <property type="evidence" value="ECO:0007669"/>
    <property type="project" value="UniProtKB-SubCell"/>
</dbReference>
<dbReference type="GO" id="GO:0005886">
    <property type="term" value="C:plasma membrane"/>
    <property type="evidence" value="ECO:0000250"/>
    <property type="project" value="UniProtKB"/>
</dbReference>
<dbReference type="GO" id="GO:0032869">
    <property type="term" value="P:cellular response to insulin stimulus"/>
    <property type="evidence" value="ECO:0000250"/>
    <property type="project" value="UniProtKB"/>
</dbReference>
<dbReference type="GO" id="GO:0099638">
    <property type="term" value="P:endosome to plasma membrane protein transport"/>
    <property type="evidence" value="ECO:0000250"/>
    <property type="project" value="UniProtKB"/>
</dbReference>
<dbReference type="GO" id="GO:0044381">
    <property type="term" value="P:glucose import in response to insulin stimulus"/>
    <property type="evidence" value="ECO:0000250"/>
    <property type="project" value="UniProtKB"/>
</dbReference>
<dbReference type="GO" id="GO:0072659">
    <property type="term" value="P:protein localization to plasma membrane"/>
    <property type="evidence" value="ECO:0000250"/>
    <property type="project" value="UniProtKB"/>
</dbReference>
<dbReference type="GO" id="GO:0099500">
    <property type="term" value="P:vesicle fusion to plasma membrane"/>
    <property type="evidence" value="ECO:0007669"/>
    <property type="project" value="Ensembl"/>
</dbReference>
<dbReference type="InterPro" id="IPR051423">
    <property type="entry name" value="CD225/Dispanin"/>
</dbReference>
<dbReference type="InterPro" id="IPR007593">
    <property type="entry name" value="CD225/Dispanin_fam"/>
</dbReference>
<dbReference type="PANTHER" id="PTHR14948">
    <property type="entry name" value="NG5"/>
    <property type="match status" value="1"/>
</dbReference>
<dbReference type="PANTHER" id="PTHR14948:SF1">
    <property type="entry name" value="TRAFFICKING REGULATOR OF GLUT4 1"/>
    <property type="match status" value="1"/>
</dbReference>
<dbReference type="Pfam" id="PF04505">
    <property type="entry name" value="CD225"/>
    <property type="match status" value="1"/>
</dbReference>
<evidence type="ECO:0000250" key="1">
    <source>
        <dbReference type="UniProtKB" id="Q2MHH0"/>
    </source>
</evidence>
<evidence type="ECO:0000250" key="2">
    <source>
        <dbReference type="UniProtKB" id="Q8C838"/>
    </source>
</evidence>
<evidence type="ECO:0000255" key="3"/>
<evidence type="ECO:0000256" key="4">
    <source>
        <dbReference type="SAM" id="MobiDB-lite"/>
    </source>
</evidence>
<evidence type="ECO:0000269" key="5">
    <source>
    </source>
</evidence>
<evidence type="ECO:0000269" key="6">
    <source>
    </source>
</evidence>
<evidence type="ECO:0000305" key="7"/>
<evidence type="ECO:0000312" key="8">
    <source>
        <dbReference type="HGNC" id="HGNC:29592"/>
    </source>
</evidence>
<gene>
    <name evidence="8" type="primary">TRARG1</name>
    <name type="synonym">IFITMD3</name>
    <name type="synonym">LOST1</name>
    <name evidence="8" type="synonym">TUSC5</name>
</gene>
<protein>
    <recommendedName>
        <fullName evidence="8">Trafficking regulator of GLUT4 1</fullName>
    </recommendedName>
    <alternativeName>
        <fullName>Dispanin subfamily B member 1</fullName>
        <shortName>DSPB1</shortName>
    </alternativeName>
    <alternativeName>
        <fullName>Interferon-induced transmembrane domain-containing protein D3</fullName>
    </alternativeName>
    <alternativeName>
        <fullName>Protein located at seventeen-p-thirteen point three 1</fullName>
    </alternativeName>
    <alternativeName>
        <fullName>Tumor suppressor candidate 5</fullName>
    </alternativeName>
</protein>
<keyword id="KW-1003">Cell membrane</keyword>
<keyword id="KW-0963">Cytoplasm</keyword>
<keyword id="KW-0472">Membrane</keyword>
<keyword id="KW-0597">Phosphoprotein</keyword>
<keyword id="KW-1267">Proteomics identification</keyword>
<keyword id="KW-1185">Reference proteome</keyword>
<keyword id="KW-0812">Transmembrane</keyword>
<keyword id="KW-1133">Transmembrane helix</keyword>
<comment type="function">
    <text evidence="2">Regulates insulin-mediated adipose tissue glucose uptake and transport by modulation of SLC2A4 recycling. Not required for SLC2A4 membrane fusion upon an initial stimulus, but rather is necessary for proper protein recycling during prolonged insulin stimulation.</text>
</comment>
<comment type="subunit">
    <text evidence="2">Interacts with SLC2A4; the interaction is required for proper SLC2A4 reacycling after insulin stimulation.</text>
</comment>
<comment type="subcellular location">
    <subcellularLocation>
        <location evidence="2">Cell membrane</location>
        <topology evidence="2">Single-pass membrane protein</topology>
    </subcellularLocation>
    <subcellularLocation>
        <location evidence="2">Endomembrane system</location>
        <topology evidence="2">Single-pass membrane protein</topology>
    </subcellularLocation>
    <subcellularLocation>
        <location evidence="2">Cytoplasm</location>
        <location evidence="2">Perinuclear region</location>
    </subcellularLocation>
    <text evidence="2">Shifts from low-density microsome vesicles to the cell membrane upon insulin stimulation.</text>
</comment>
<comment type="tissue specificity">
    <text evidence="5 6">Expressed at high levels in heart, mammary gland, adrenal gland, stomach, smooth muscle and skeletal muscle, and at lower levels in brain and lung. Strongly down-regulated in lung cancer tissues, due to hypermethylation of the corresponding locus (PubMed:12660825). Expressed in adipose tissue (PubMed:26629404).</text>
</comment>
<comment type="developmental stage">
    <text evidence="5">Expressed in fetal brain.</text>
</comment>
<comment type="similarity">
    <text evidence="7">Belongs to the CD225/Dispanin family.</text>
</comment>
<reference key="1">
    <citation type="journal article" date="2003" name="Oncogene">
        <title>Detailed characterization of a homozygously deleted region corresponding to a candidate tumor suppressor locus at distal 17p13.3 in human lung cancer.</title>
        <authorList>
            <person name="Konishi H."/>
            <person name="Sugiyama M."/>
            <person name="Mizuno K."/>
            <person name="Saito H."/>
            <person name="Yatabe Y."/>
            <person name="Takahashi T."/>
            <person name="Osada H."/>
            <person name="Takahashi T."/>
        </authorList>
    </citation>
    <scope>NUCLEOTIDE SEQUENCE [MRNA]</scope>
    <scope>TISSUE SPECIFICITY</scope>
    <scope>DEVELOPMENTAL STAGE</scope>
    <scope>VARIANTS TYR-3; SER-15; THR-18; SER-20; ASP-34 AND GLY-57</scope>
    <source>
        <tissue>Lung</tissue>
    </source>
</reference>
<reference key="2">
    <citation type="journal article" date="2006" name="Nature">
        <title>DNA sequence of human chromosome 17 and analysis of rearrangement in the human lineage.</title>
        <authorList>
            <person name="Zody M.C."/>
            <person name="Garber M."/>
            <person name="Adams D.J."/>
            <person name="Sharpe T."/>
            <person name="Harrow J."/>
            <person name="Lupski J.R."/>
            <person name="Nicholson C."/>
            <person name="Searle S.M."/>
            <person name="Wilming L."/>
            <person name="Young S.K."/>
            <person name="Abouelleil A."/>
            <person name="Allen N.R."/>
            <person name="Bi W."/>
            <person name="Bloom T."/>
            <person name="Borowsky M.L."/>
            <person name="Bugalter B.E."/>
            <person name="Butler J."/>
            <person name="Chang J.L."/>
            <person name="Chen C.-K."/>
            <person name="Cook A."/>
            <person name="Corum B."/>
            <person name="Cuomo C.A."/>
            <person name="de Jong P.J."/>
            <person name="DeCaprio D."/>
            <person name="Dewar K."/>
            <person name="FitzGerald M."/>
            <person name="Gilbert J."/>
            <person name="Gibson R."/>
            <person name="Gnerre S."/>
            <person name="Goldstein S."/>
            <person name="Grafham D.V."/>
            <person name="Grocock R."/>
            <person name="Hafez N."/>
            <person name="Hagopian D.S."/>
            <person name="Hart E."/>
            <person name="Norman C.H."/>
            <person name="Humphray S."/>
            <person name="Jaffe D.B."/>
            <person name="Jones M."/>
            <person name="Kamal M."/>
            <person name="Khodiyar V.K."/>
            <person name="LaButti K."/>
            <person name="Laird G."/>
            <person name="Lehoczky J."/>
            <person name="Liu X."/>
            <person name="Lokyitsang T."/>
            <person name="Loveland J."/>
            <person name="Lui A."/>
            <person name="Macdonald P."/>
            <person name="Major J.E."/>
            <person name="Matthews L."/>
            <person name="Mauceli E."/>
            <person name="McCarroll S.A."/>
            <person name="Mihalev A.H."/>
            <person name="Mudge J."/>
            <person name="Nguyen C."/>
            <person name="Nicol R."/>
            <person name="O'Leary S.B."/>
            <person name="Osoegawa K."/>
            <person name="Schwartz D.C."/>
            <person name="Shaw-Smith C."/>
            <person name="Stankiewicz P."/>
            <person name="Steward C."/>
            <person name="Swarbreck D."/>
            <person name="Venkataraman V."/>
            <person name="Whittaker C.A."/>
            <person name="Yang X."/>
            <person name="Zimmer A.R."/>
            <person name="Bradley A."/>
            <person name="Hubbard T."/>
            <person name="Birren B.W."/>
            <person name="Rogers J."/>
            <person name="Lander E.S."/>
            <person name="Nusbaum C."/>
        </authorList>
    </citation>
    <scope>NUCLEOTIDE SEQUENCE [LARGE SCALE GENOMIC DNA]</scope>
</reference>
<reference key="3">
    <citation type="submission" date="2005-09" db="EMBL/GenBank/DDBJ databases">
        <authorList>
            <person name="Mural R.J."/>
            <person name="Istrail S."/>
            <person name="Sutton G.G."/>
            <person name="Florea L."/>
            <person name="Halpern A.L."/>
            <person name="Mobarry C.M."/>
            <person name="Lippert R."/>
            <person name="Walenz B."/>
            <person name="Shatkay H."/>
            <person name="Dew I."/>
            <person name="Miller J.R."/>
            <person name="Flanigan M.J."/>
            <person name="Edwards N.J."/>
            <person name="Bolanos R."/>
            <person name="Fasulo D."/>
            <person name="Halldorsson B.V."/>
            <person name="Hannenhalli S."/>
            <person name="Turner R."/>
            <person name="Yooseph S."/>
            <person name="Lu F."/>
            <person name="Nusskern D.R."/>
            <person name="Shue B.C."/>
            <person name="Zheng X.H."/>
            <person name="Zhong F."/>
            <person name="Delcher A.L."/>
            <person name="Huson D.H."/>
            <person name="Kravitz S.A."/>
            <person name="Mouchard L."/>
            <person name="Reinert K."/>
            <person name="Remington K.A."/>
            <person name="Clark A.G."/>
            <person name="Waterman M.S."/>
            <person name="Eichler E.E."/>
            <person name="Adams M.D."/>
            <person name="Hunkapiller M.W."/>
            <person name="Myers E.W."/>
            <person name="Venter J.C."/>
        </authorList>
    </citation>
    <scope>NUCLEOTIDE SEQUENCE [LARGE SCALE GENOMIC DNA]</scope>
</reference>
<reference key="4">
    <citation type="journal article" date="2012" name="PLoS ONE">
        <title>The dispanins: a novel gene family of ancient origin that contains 14 human members.</title>
        <authorList>
            <person name="Sallman Almen M."/>
            <person name="Bringeland N."/>
            <person name="Fredriksson R."/>
            <person name="Schioth H.B."/>
        </authorList>
    </citation>
    <scope>GENE FAMILY</scope>
</reference>
<reference key="5">
    <citation type="journal article" date="2015" name="Mol. Metab.">
        <title>TUSC5 regulates insulin-mediated adipose tissue glucose uptake by modulation of GLUT4 recycling.</title>
        <authorList>
            <person name="Beaton N."/>
            <person name="Rudigier C."/>
            <person name="Moest H."/>
            <person name="Mueller S."/>
            <person name="Mrosek N."/>
            <person name="Roeder E."/>
            <person name="Rudofsky G."/>
            <person name="Ruelicke T."/>
            <person name="Ukropec J."/>
            <person name="Ukropcova B."/>
            <person name="Augustin R."/>
            <person name="Neubauer H."/>
            <person name="Wolfrum C."/>
        </authorList>
    </citation>
    <scope>TISSUE SPECIFICITY</scope>
</reference>
<organism>
    <name type="scientific">Homo sapiens</name>
    <name type="common">Human</name>
    <dbReference type="NCBI Taxonomy" id="9606"/>
    <lineage>
        <taxon>Eukaryota</taxon>
        <taxon>Metazoa</taxon>
        <taxon>Chordata</taxon>
        <taxon>Craniata</taxon>
        <taxon>Vertebrata</taxon>
        <taxon>Euteleostomi</taxon>
        <taxon>Mammalia</taxon>
        <taxon>Eutheria</taxon>
        <taxon>Euarchontoglires</taxon>
        <taxon>Primates</taxon>
        <taxon>Haplorrhini</taxon>
        <taxon>Catarrhini</taxon>
        <taxon>Hominidae</taxon>
        <taxon>Homo</taxon>
    </lineage>
</organism>
<sequence length="177" mass="19254">MAHPVQSEFPSAQEPGSAAFLDLPEMEILLTKAENKDDKTLNLSKTLSGPLDLEQNSQGLPFKAISEGHLEAPLPRSPSRASSRRASSIATTSYAQDQEAPRDYLILAVVACFCPVWPLNLIPLIISIMSRSSMQQGNVDGARRLGRLARLLSITLIIMGIVIIMVAVTVNFTVQKK</sequence>